<name>COBQ_THEPX</name>
<reference key="1">
    <citation type="submission" date="2008-01" db="EMBL/GenBank/DDBJ databases">
        <title>Complete sequence of Thermoanaerobacter sp. X514.</title>
        <authorList>
            <consortium name="US DOE Joint Genome Institute"/>
            <person name="Copeland A."/>
            <person name="Lucas S."/>
            <person name="Lapidus A."/>
            <person name="Barry K."/>
            <person name="Glavina del Rio T."/>
            <person name="Dalin E."/>
            <person name="Tice H."/>
            <person name="Pitluck S."/>
            <person name="Bruce D."/>
            <person name="Goodwin L."/>
            <person name="Saunders E."/>
            <person name="Brettin T."/>
            <person name="Detter J.C."/>
            <person name="Han C."/>
            <person name="Schmutz J."/>
            <person name="Larimer F."/>
            <person name="Land M."/>
            <person name="Hauser L."/>
            <person name="Kyrpides N."/>
            <person name="Kim E."/>
            <person name="Hemme C."/>
            <person name="Fields M.W."/>
            <person name="He Z."/>
            <person name="Zhou J."/>
            <person name="Richardson P."/>
        </authorList>
    </citation>
    <scope>NUCLEOTIDE SEQUENCE [LARGE SCALE GENOMIC DNA]</scope>
    <source>
        <strain>X514</strain>
    </source>
</reference>
<feature type="chain" id="PRO_1000116437" description="Cobyric acid synthase">
    <location>
        <begin position="1"/>
        <end position="507"/>
    </location>
</feature>
<feature type="domain" description="GATase cobBQ-type" evidence="1">
    <location>
        <begin position="249"/>
        <end position="451"/>
    </location>
</feature>
<feature type="active site" description="Nucleophile" evidence="1">
    <location>
        <position position="330"/>
    </location>
</feature>
<feature type="active site" evidence="1">
    <location>
        <position position="443"/>
    </location>
</feature>
<organism>
    <name type="scientific">Thermoanaerobacter sp. (strain X514)</name>
    <dbReference type="NCBI Taxonomy" id="399726"/>
    <lineage>
        <taxon>Bacteria</taxon>
        <taxon>Bacillati</taxon>
        <taxon>Bacillota</taxon>
        <taxon>Clostridia</taxon>
        <taxon>Thermoanaerobacterales</taxon>
        <taxon>Thermoanaerobacteraceae</taxon>
        <taxon>Thermoanaerobacter</taxon>
    </lineage>
</organism>
<proteinExistence type="inferred from homology"/>
<comment type="function">
    <text evidence="1">Catalyzes amidations at positions B, D, E, and G on adenosylcobyrinic A,C-diamide. NH(2) groups are provided by glutamine, and one molecule of ATP is hydrogenolyzed for each amidation.</text>
</comment>
<comment type="pathway">
    <text evidence="1">Cofactor biosynthesis; adenosylcobalamin biosynthesis.</text>
</comment>
<comment type="similarity">
    <text evidence="1">Belongs to the CobB/CobQ family. CobQ subfamily.</text>
</comment>
<accession>B0K2J6</accession>
<sequence>MALKLMIQGTASSVGKSLLVAAFCRIFKQDGYRVAPFKSQNMALNSYITDEGLEIGRAQAMQAEAAGVKPSYHMNPILLKPSSDKKSQVVLRGKVYKNMSAAEYHQFKPQLLKFIKEDFDFLASQNDIVVIEGAGSPAEINLRDRDVVNMGMAEMVNAPVLLVGDIDKGGVFASIAGTLLLLKENERNRIEGVLINKFRGDIEILKPGLEMLENIVHKKVLGVVPYMDVHIDEEDGATERFYRRSTEGDIEIAVINLPHISNFTDFEPLAKVPGVKLRYVNKGERIGDCDVVIIPGTKNTIGDLQALKGYRLDKEIFEMRKKGKFIVGICGGYQILGKVIKDPGRIESTTSEIEGLGLLDVETVIENEKTTTQIKAVIRNNLPSILSPLRNIAVEGYEIHMGKSRILGDCQPFSVITHRNGEKIEVYDGCISDDGKVFGTYIHGIFENREFVREFINIVRKSKGLSPIEEIIDYKEFKEREYDKLADIVRKSIDMKKVYEIMERYKD</sequence>
<dbReference type="EMBL" id="CP000923">
    <property type="protein sequence ID" value="ABY91616.1"/>
    <property type="molecule type" value="Genomic_DNA"/>
</dbReference>
<dbReference type="RefSeq" id="WP_009051853.1">
    <property type="nucleotide sequence ID" value="NC_010320.1"/>
</dbReference>
<dbReference type="SMR" id="B0K2J6"/>
<dbReference type="KEGG" id="tex:Teth514_0300"/>
<dbReference type="HOGENOM" id="CLU_019250_2_2_9"/>
<dbReference type="UniPathway" id="UPA00148"/>
<dbReference type="Proteomes" id="UP000002155">
    <property type="component" value="Chromosome"/>
</dbReference>
<dbReference type="GO" id="GO:0015420">
    <property type="term" value="F:ABC-type vitamin B12 transporter activity"/>
    <property type="evidence" value="ECO:0007669"/>
    <property type="project" value="UniProtKB-UniRule"/>
</dbReference>
<dbReference type="GO" id="GO:0003824">
    <property type="term" value="F:catalytic activity"/>
    <property type="evidence" value="ECO:0007669"/>
    <property type="project" value="InterPro"/>
</dbReference>
<dbReference type="GO" id="GO:0009236">
    <property type="term" value="P:cobalamin biosynthetic process"/>
    <property type="evidence" value="ECO:0007669"/>
    <property type="project" value="UniProtKB-UniRule"/>
</dbReference>
<dbReference type="CDD" id="cd05389">
    <property type="entry name" value="CobQ_N"/>
    <property type="match status" value="1"/>
</dbReference>
<dbReference type="CDD" id="cd01750">
    <property type="entry name" value="GATase1_CobQ"/>
    <property type="match status" value="1"/>
</dbReference>
<dbReference type="Gene3D" id="3.40.50.880">
    <property type="match status" value="1"/>
</dbReference>
<dbReference type="Gene3D" id="3.40.50.300">
    <property type="entry name" value="P-loop containing nucleotide triphosphate hydrolases"/>
    <property type="match status" value="1"/>
</dbReference>
<dbReference type="HAMAP" id="MF_00028">
    <property type="entry name" value="CobQ"/>
    <property type="match status" value="1"/>
</dbReference>
<dbReference type="InterPro" id="IPR029062">
    <property type="entry name" value="Class_I_gatase-like"/>
</dbReference>
<dbReference type="InterPro" id="IPR002586">
    <property type="entry name" value="CobQ/CobB/MinD/ParA_Nub-bd_dom"/>
</dbReference>
<dbReference type="InterPro" id="IPR033949">
    <property type="entry name" value="CobQ_GATase1"/>
</dbReference>
<dbReference type="InterPro" id="IPR047045">
    <property type="entry name" value="CobQ_N"/>
</dbReference>
<dbReference type="InterPro" id="IPR004459">
    <property type="entry name" value="CobQ_synth"/>
</dbReference>
<dbReference type="InterPro" id="IPR011698">
    <property type="entry name" value="GATase_3"/>
</dbReference>
<dbReference type="InterPro" id="IPR027417">
    <property type="entry name" value="P-loop_NTPase"/>
</dbReference>
<dbReference type="NCBIfam" id="TIGR00313">
    <property type="entry name" value="cobQ"/>
    <property type="match status" value="1"/>
</dbReference>
<dbReference type="NCBIfam" id="NF001989">
    <property type="entry name" value="PRK00784.1"/>
    <property type="match status" value="1"/>
</dbReference>
<dbReference type="PANTHER" id="PTHR21343:SF1">
    <property type="entry name" value="COBYRIC ACID SYNTHASE"/>
    <property type="match status" value="1"/>
</dbReference>
<dbReference type="PANTHER" id="PTHR21343">
    <property type="entry name" value="DETHIOBIOTIN SYNTHETASE"/>
    <property type="match status" value="1"/>
</dbReference>
<dbReference type="Pfam" id="PF01656">
    <property type="entry name" value="CbiA"/>
    <property type="match status" value="1"/>
</dbReference>
<dbReference type="Pfam" id="PF07685">
    <property type="entry name" value="GATase_3"/>
    <property type="match status" value="1"/>
</dbReference>
<dbReference type="SUPFAM" id="SSF52317">
    <property type="entry name" value="Class I glutamine amidotransferase-like"/>
    <property type="match status" value="1"/>
</dbReference>
<dbReference type="SUPFAM" id="SSF52540">
    <property type="entry name" value="P-loop containing nucleoside triphosphate hydrolases"/>
    <property type="match status" value="1"/>
</dbReference>
<dbReference type="PROSITE" id="PS51274">
    <property type="entry name" value="GATASE_COBBQ"/>
    <property type="match status" value="1"/>
</dbReference>
<evidence type="ECO:0000255" key="1">
    <source>
        <dbReference type="HAMAP-Rule" id="MF_00028"/>
    </source>
</evidence>
<keyword id="KW-0169">Cobalamin biosynthesis</keyword>
<keyword id="KW-0315">Glutamine amidotransferase</keyword>
<gene>
    <name evidence="1" type="primary">cobQ</name>
    <name type="ordered locus">Teth514_0300</name>
</gene>
<protein>
    <recommendedName>
        <fullName evidence="1">Cobyric acid synthase</fullName>
    </recommendedName>
</protein>